<reference key="1">
    <citation type="journal article" date="2005" name="Science">
        <title>The transcriptional landscape of the mammalian genome.</title>
        <authorList>
            <person name="Carninci P."/>
            <person name="Kasukawa T."/>
            <person name="Katayama S."/>
            <person name="Gough J."/>
            <person name="Frith M.C."/>
            <person name="Maeda N."/>
            <person name="Oyama R."/>
            <person name="Ravasi T."/>
            <person name="Lenhard B."/>
            <person name="Wells C."/>
            <person name="Kodzius R."/>
            <person name="Shimokawa K."/>
            <person name="Bajic V.B."/>
            <person name="Brenner S.E."/>
            <person name="Batalov S."/>
            <person name="Forrest A.R."/>
            <person name="Zavolan M."/>
            <person name="Davis M.J."/>
            <person name="Wilming L.G."/>
            <person name="Aidinis V."/>
            <person name="Allen J.E."/>
            <person name="Ambesi-Impiombato A."/>
            <person name="Apweiler R."/>
            <person name="Aturaliya R.N."/>
            <person name="Bailey T.L."/>
            <person name="Bansal M."/>
            <person name="Baxter L."/>
            <person name="Beisel K.W."/>
            <person name="Bersano T."/>
            <person name="Bono H."/>
            <person name="Chalk A.M."/>
            <person name="Chiu K.P."/>
            <person name="Choudhary V."/>
            <person name="Christoffels A."/>
            <person name="Clutterbuck D.R."/>
            <person name="Crowe M.L."/>
            <person name="Dalla E."/>
            <person name="Dalrymple B.P."/>
            <person name="de Bono B."/>
            <person name="Della Gatta G."/>
            <person name="di Bernardo D."/>
            <person name="Down T."/>
            <person name="Engstrom P."/>
            <person name="Fagiolini M."/>
            <person name="Faulkner G."/>
            <person name="Fletcher C.F."/>
            <person name="Fukushima T."/>
            <person name="Furuno M."/>
            <person name="Futaki S."/>
            <person name="Gariboldi M."/>
            <person name="Georgii-Hemming P."/>
            <person name="Gingeras T.R."/>
            <person name="Gojobori T."/>
            <person name="Green R.E."/>
            <person name="Gustincich S."/>
            <person name="Harbers M."/>
            <person name="Hayashi Y."/>
            <person name="Hensch T.K."/>
            <person name="Hirokawa N."/>
            <person name="Hill D."/>
            <person name="Huminiecki L."/>
            <person name="Iacono M."/>
            <person name="Ikeo K."/>
            <person name="Iwama A."/>
            <person name="Ishikawa T."/>
            <person name="Jakt M."/>
            <person name="Kanapin A."/>
            <person name="Katoh M."/>
            <person name="Kawasawa Y."/>
            <person name="Kelso J."/>
            <person name="Kitamura H."/>
            <person name="Kitano H."/>
            <person name="Kollias G."/>
            <person name="Krishnan S.P."/>
            <person name="Kruger A."/>
            <person name="Kummerfeld S.K."/>
            <person name="Kurochkin I.V."/>
            <person name="Lareau L.F."/>
            <person name="Lazarevic D."/>
            <person name="Lipovich L."/>
            <person name="Liu J."/>
            <person name="Liuni S."/>
            <person name="McWilliam S."/>
            <person name="Madan Babu M."/>
            <person name="Madera M."/>
            <person name="Marchionni L."/>
            <person name="Matsuda H."/>
            <person name="Matsuzawa S."/>
            <person name="Miki H."/>
            <person name="Mignone F."/>
            <person name="Miyake S."/>
            <person name="Morris K."/>
            <person name="Mottagui-Tabar S."/>
            <person name="Mulder N."/>
            <person name="Nakano N."/>
            <person name="Nakauchi H."/>
            <person name="Ng P."/>
            <person name="Nilsson R."/>
            <person name="Nishiguchi S."/>
            <person name="Nishikawa S."/>
            <person name="Nori F."/>
            <person name="Ohara O."/>
            <person name="Okazaki Y."/>
            <person name="Orlando V."/>
            <person name="Pang K.C."/>
            <person name="Pavan W.J."/>
            <person name="Pavesi G."/>
            <person name="Pesole G."/>
            <person name="Petrovsky N."/>
            <person name="Piazza S."/>
            <person name="Reed J."/>
            <person name="Reid J.F."/>
            <person name="Ring B.Z."/>
            <person name="Ringwald M."/>
            <person name="Rost B."/>
            <person name="Ruan Y."/>
            <person name="Salzberg S.L."/>
            <person name="Sandelin A."/>
            <person name="Schneider C."/>
            <person name="Schoenbach C."/>
            <person name="Sekiguchi K."/>
            <person name="Semple C.A."/>
            <person name="Seno S."/>
            <person name="Sessa L."/>
            <person name="Sheng Y."/>
            <person name="Shibata Y."/>
            <person name="Shimada H."/>
            <person name="Shimada K."/>
            <person name="Silva D."/>
            <person name="Sinclair B."/>
            <person name="Sperling S."/>
            <person name="Stupka E."/>
            <person name="Sugiura K."/>
            <person name="Sultana R."/>
            <person name="Takenaka Y."/>
            <person name="Taki K."/>
            <person name="Tammoja K."/>
            <person name="Tan S.L."/>
            <person name="Tang S."/>
            <person name="Taylor M.S."/>
            <person name="Tegner J."/>
            <person name="Teichmann S.A."/>
            <person name="Ueda H.R."/>
            <person name="van Nimwegen E."/>
            <person name="Verardo R."/>
            <person name="Wei C.L."/>
            <person name="Yagi K."/>
            <person name="Yamanishi H."/>
            <person name="Zabarovsky E."/>
            <person name="Zhu S."/>
            <person name="Zimmer A."/>
            <person name="Hide W."/>
            <person name="Bult C."/>
            <person name="Grimmond S.M."/>
            <person name="Teasdale R.D."/>
            <person name="Liu E.T."/>
            <person name="Brusic V."/>
            <person name="Quackenbush J."/>
            <person name="Wahlestedt C."/>
            <person name="Mattick J.S."/>
            <person name="Hume D.A."/>
            <person name="Kai C."/>
            <person name="Sasaki D."/>
            <person name="Tomaru Y."/>
            <person name="Fukuda S."/>
            <person name="Kanamori-Katayama M."/>
            <person name="Suzuki M."/>
            <person name="Aoki J."/>
            <person name="Arakawa T."/>
            <person name="Iida J."/>
            <person name="Imamura K."/>
            <person name="Itoh M."/>
            <person name="Kato T."/>
            <person name="Kawaji H."/>
            <person name="Kawagashira N."/>
            <person name="Kawashima T."/>
            <person name="Kojima M."/>
            <person name="Kondo S."/>
            <person name="Konno H."/>
            <person name="Nakano K."/>
            <person name="Ninomiya N."/>
            <person name="Nishio T."/>
            <person name="Okada M."/>
            <person name="Plessy C."/>
            <person name="Shibata K."/>
            <person name="Shiraki T."/>
            <person name="Suzuki S."/>
            <person name="Tagami M."/>
            <person name="Waki K."/>
            <person name="Watahiki A."/>
            <person name="Okamura-Oho Y."/>
            <person name="Suzuki H."/>
            <person name="Kawai J."/>
            <person name="Hayashizaki Y."/>
        </authorList>
    </citation>
    <scope>NUCLEOTIDE SEQUENCE [LARGE SCALE MRNA]</scope>
    <source>
        <strain>C57BL/6J</strain>
        <tissue>Egg</tissue>
    </source>
</reference>
<reference key="2">
    <citation type="journal article" date="2016" name="PLoS ONE">
        <title>Efficient Gene Knockdown in Mouse Oocytes through Peptide Nanoparticle-Mediated SiRNA Transfection.</title>
        <authorList>
            <person name="Jin Z."/>
            <person name="Li R."/>
            <person name="Zhou C."/>
            <person name="Shi L."/>
            <person name="Zhang X."/>
            <person name="Yang Z."/>
            <person name="Zhang D."/>
        </authorList>
    </citation>
    <scope>FUNCTION</scope>
    <scope>SUBCELLULAR LOCATION</scope>
</reference>
<proteinExistence type="evidence at protein level"/>
<comment type="function">
    <text evidence="5">May play a role in female meiosis.</text>
</comment>
<comment type="subcellular location">
    <subcellularLocation>
        <location evidence="7">Cytoplasm</location>
        <location evidence="7">Cytoskeleton</location>
        <location evidence="7">Spindle</location>
    </subcellularLocation>
</comment>
<comment type="similarity">
    <text evidence="6">Belongs to the TRIM/RBCC family.</text>
</comment>
<keyword id="KW-0002">3D-structure</keyword>
<keyword id="KW-0175">Coiled coil</keyword>
<keyword id="KW-0963">Cytoplasm</keyword>
<keyword id="KW-0206">Cytoskeleton</keyword>
<keyword id="KW-0479">Metal-binding</keyword>
<keyword id="KW-1185">Reference proteome</keyword>
<keyword id="KW-0862">Zinc</keyword>
<keyword id="KW-0863">Zinc-finger</keyword>
<name>TRI75_MOUSE</name>
<dbReference type="EMBL" id="AK136018">
    <property type="protein sequence ID" value="BAE22774.1"/>
    <property type="molecule type" value="mRNA"/>
</dbReference>
<dbReference type="CCDS" id="CCDS22330.1"/>
<dbReference type="RefSeq" id="NP_001028601.1">
    <property type="nucleotide sequence ID" value="NM_001033429.2"/>
</dbReference>
<dbReference type="PDB" id="7UG2">
    <property type="method" value="X-ray"/>
    <property type="resolution" value="2.05 A"/>
    <property type="chains" value="A=168-222"/>
</dbReference>
<dbReference type="PDBsum" id="7UG2"/>
<dbReference type="SMR" id="Q3UWZ0"/>
<dbReference type="BioGRID" id="237155">
    <property type="interactions" value="1"/>
</dbReference>
<dbReference type="FunCoup" id="Q3UWZ0">
    <property type="interactions" value="59"/>
</dbReference>
<dbReference type="STRING" id="10090.ENSMUSP00000092932"/>
<dbReference type="PhosphoSitePlus" id="Q3UWZ0"/>
<dbReference type="PaxDb" id="10090-ENSMUSP00000092932"/>
<dbReference type="Antibodypedia" id="1279">
    <property type="antibodies" value="285 antibodies from 26 providers"/>
</dbReference>
<dbReference type="Ensembl" id="ENSMUST00000095295.3">
    <property type="protein sequence ID" value="ENSMUSP00000092932.2"/>
    <property type="gene ID" value="ENSMUSG00000071089.4"/>
</dbReference>
<dbReference type="GeneID" id="333307"/>
<dbReference type="KEGG" id="mmu:333307"/>
<dbReference type="UCSC" id="uc009lvd.1">
    <property type="organism name" value="mouse"/>
</dbReference>
<dbReference type="AGR" id="MGI:2685640"/>
<dbReference type="CTD" id="391714"/>
<dbReference type="MGI" id="MGI:2685640">
    <property type="gene designation" value="Trim75"/>
</dbReference>
<dbReference type="VEuPathDB" id="HostDB:ENSMUSG00000071089"/>
<dbReference type="eggNOG" id="KOG2177">
    <property type="taxonomic scope" value="Eukaryota"/>
</dbReference>
<dbReference type="GeneTree" id="ENSGT00940000163787"/>
<dbReference type="HOGENOM" id="CLU_013137_0_3_1"/>
<dbReference type="InParanoid" id="Q3UWZ0"/>
<dbReference type="OMA" id="CVRFTKR"/>
<dbReference type="OrthoDB" id="128536at2759"/>
<dbReference type="PhylomeDB" id="Q3UWZ0"/>
<dbReference type="TreeFam" id="TF342569"/>
<dbReference type="BioGRID-ORCS" id="333307">
    <property type="hits" value="3 hits in 77 CRISPR screens"/>
</dbReference>
<dbReference type="PRO" id="PR:Q3UWZ0"/>
<dbReference type="Proteomes" id="UP000000589">
    <property type="component" value="Chromosome 8"/>
</dbReference>
<dbReference type="RNAct" id="Q3UWZ0">
    <property type="molecule type" value="protein"/>
</dbReference>
<dbReference type="Bgee" id="ENSMUSG00000071089">
    <property type="expression patterns" value="Expressed in animal zygote and 14 other cell types or tissues"/>
</dbReference>
<dbReference type="ExpressionAtlas" id="Q3UWZ0">
    <property type="expression patterns" value="baseline and differential"/>
</dbReference>
<dbReference type="GO" id="GO:0005737">
    <property type="term" value="C:cytoplasm"/>
    <property type="evidence" value="ECO:0007669"/>
    <property type="project" value="UniProtKB-KW"/>
</dbReference>
<dbReference type="GO" id="GO:0005819">
    <property type="term" value="C:spindle"/>
    <property type="evidence" value="ECO:0007669"/>
    <property type="project" value="UniProtKB-SubCell"/>
</dbReference>
<dbReference type="GO" id="GO:0008270">
    <property type="term" value="F:zinc ion binding"/>
    <property type="evidence" value="ECO:0007669"/>
    <property type="project" value="UniProtKB-KW"/>
</dbReference>
<dbReference type="GO" id="GO:0007144">
    <property type="term" value="P:female meiosis I"/>
    <property type="evidence" value="ECO:0000315"/>
    <property type="project" value="UniProtKB"/>
</dbReference>
<dbReference type="CDD" id="cd16594">
    <property type="entry name" value="RING-HC_TRIM7-like_C-IV"/>
    <property type="match status" value="1"/>
</dbReference>
<dbReference type="CDD" id="cd15829">
    <property type="entry name" value="SPRY_PRY_TRIM75"/>
    <property type="match status" value="1"/>
</dbReference>
<dbReference type="FunFam" id="2.60.120.920:FF:000004">
    <property type="entry name" value="Butyrophilin subfamily 1 member A1"/>
    <property type="match status" value="1"/>
</dbReference>
<dbReference type="Gene3D" id="2.60.120.920">
    <property type="match status" value="1"/>
</dbReference>
<dbReference type="Gene3D" id="3.30.160.60">
    <property type="entry name" value="Classic Zinc Finger"/>
    <property type="match status" value="1"/>
</dbReference>
<dbReference type="Gene3D" id="3.30.40.10">
    <property type="entry name" value="Zinc/RING finger domain, C3HC4 (zinc finger)"/>
    <property type="match status" value="1"/>
</dbReference>
<dbReference type="InterPro" id="IPR001870">
    <property type="entry name" value="B30.2/SPRY"/>
</dbReference>
<dbReference type="InterPro" id="IPR043136">
    <property type="entry name" value="B30.2/SPRY_sf"/>
</dbReference>
<dbReference type="InterPro" id="IPR003879">
    <property type="entry name" value="Butyrophylin_SPRY"/>
</dbReference>
<dbReference type="InterPro" id="IPR013320">
    <property type="entry name" value="ConA-like_dom_sf"/>
</dbReference>
<dbReference type="InterPro" id="IPR006574">
    <property type="entry name" value="PRY"/>
</dbReference>
<dbReference type="InterPro" id="IPR035785">
    <property type="entry name" value="SPRY/PRY_TRIM75"/>
</dbReference>
<dbReference type="InterPro" id="IPR003877">
    <property type="entry name" value="SPRY_dom"/>
</dbReference>
<dbReference type="InterPro" id="IPR050143">
    <property type="entry name" value="TRIM/RBCC"/>
</dbReference>
<dbReference type="InterPro" id="IPR000315">
    <property type="entry name" value="Znf_B-box"/>
</dbReference>
<dbReference type="InterPro" id="IPR001841">
    <property type="entry name" value="Znf_RING"/>
</dbReference>
<dbReference type="InterPro" id="IPR013083">
    <property type="entry name" value="Znf_RING/FYVE/PHD"/>
</dbReference>
<dbReference type="InterPro" id="IPR017907">
    <property type="entry name" value="Znf_RING_CS"/>
</dbReference>
<dbReference type="PANTHER" id="PTHR24103">
    <property type="entry name" value="E3 UBIQUITIN-PROTEIN LIGASE TRIM"/>
    <property type="match status" value="1"/>
</dbReference>
<dbReference type="Pfam" id="PF13765">
    <property type="entry name" value="PRY"/>
    <property type="match status" value="1"/>
</dbReference>
<dbReference type="Pfam" id="PF00622">
    <property type="entry name" value="SPRY"/>
    <property type="match status" value="1"/>
</dbReference>
<dbReference type="Pfam" id="PF00643">
    <property type="entry name" value="zf-B_box"/>
    <property type="match status" value="1"/>
</dbReference>
<dbReference type="Pfam" id="PF15227">
    <property type="entry name" value="zf-C3HC4_4"/>
    <property type="match status" value="1"/>
</dbReference>
<dbReference type="PRINTS" id="PR01407">
    <property type="entry name" value="BUTYPHLNCDUF"/>
</dbReference>
<dbReference type="SMART" id="SM00336">
    <property type="entry name" value="BBOX"/>
    <property type="match status" value="1"/>
</dbReference>
<dbReference type="SMART" id="SM00589">
    <property type="entry name" value="PRY"/>
    <property type="match status" value="1"/>
</dbReference>
<dbReference type="SMART" id="SM00184">
    <property type="entry name" value="RING"/>
    <property type="match status" value="1"/>
</dbReference>
<dbReference type="SMART" id="SM00449">
    <property type="entry name" value="SPRY"/>
    <property type="match status" value="1"/>
</dbReference>
<dbReference type="SUPFAM" id="SSF57845">
    <property type="entry name" value="B-box zinc-binding domain"/>
    <property type="match status" value="1"/>
</dbReference>
<dbReference type="SUPFAM" id="SSF49899">
    <property type="entry name" value="Concanavalin A-like lectins/glucanases"/>
    <property type="match status" value="1"/>
</dbReference>
<dbReference type="SUPFAM" id="SSF57850">
    <property type="entry name" value="RING/U-box"/>
    <property type="match status" value="1"/>
</dbReference>
<dbReference type="PROSITE" id="PS50188">
    <property type="entry name" value="B302_SPRY"/>
    <property type="match status" value="1"/>
</dbReference>
<dbReference type="PROSITE" id="PS50119">
    <property type="entry name" value="ZF_BBOX"/>
    <property type="match status" value="1"/>
</dbReference>
<dbReference type="PROSITE" id="PS00518">
    <property type="entry name" value="ZF_RING_1"/>
    <property type="match status" value="1"/>
</dbReference>
<dbReference type="PROSITE" id="PS50089">
    <property type="entry name" value="ZF_RING_2"/>
    <property type="match status" value="1"/>
</dbReference>
<gene>
    <name evidence="8" type="primary">Trim75</name>
    <name type="synonym">Gm794</name>
</gene>
<feature type="chain" id="PRO_0000331193" description="Tripartite motif-containing protein 75">
    <location>
        <begin position="1"/>
        <end position="467"/>
    </location>
</feature>
<feature type="domain" description="B30.2/SPRY" evidence="4">
    <location>
        <begin position="276"/>
        <end position="466"/>
    </location>
</feature>
<feature type="zinc finger region" description="RING-type" evidence="3">
    <location>
        <begin position="16"/>
        <end position="57"/>
    </location>
</feature>
<feature type="zinc finger region" description="B box-type" evidence="2">
    <location>
        <begin position="90"/>
        <end position="131"/>
    </location>
</feature>
<feature type="coiled-coil region" evidence="1">
    <location>
        <begin position="168"/>
        <end position="222"/>
    </location>
</feature>
<feature type="binding site" evidence="2">
    <location>
        <position position="95"/>
    </location>
    <ligand>
        <name>Zn(2+)</name>
        <dbReference type="ChEBI" id="CHEBI:29105"/>
    </ligand>
</feature>
<feature type="binding site" evidence="2">
    <location>
        <position position="98"/>
    </location>
    <ligand>
        <name>Zn(2+)</name>
        <dbReference type="ChEBI" id="CHEBI:29105"/>
    </ligand>
</feature>
<feature type="binding site" evidence="2">
    <location>
        <position position="117"/>
    </location>
    <ligand>
        <name>Zn(2+)</name>
        <dbReference type="ChEBI" id="CHEBI:29105"/>
    </ligand>
</feature>
<feature type="binding site" evidence="2">
    <location>
        <position position="123"/>
    </location>
    <ligand>
        <name>Zn(2+)</name>
        <dbReference type="ChEBI" id="CHEBI:29105"/>
    </ligand>
</feature>
<feature type="helix" evidence="9">
    <location>
        <begin position="175"/>
        <end position="220"/>
    </location>
</feature>
<accession>Q3UWZ0</accession>
<protein>
    <recommendedName>
        <fullName evidence="6">Tripartite motif-containing protein 75</fullName>
    </recommendedName>
</protein>
<sequence>MAHVEVLARLQKETKCPICLDDLTDPVTVECGHNFCRSCIKDFWAGQQATSSCPVCRHQCQHRNLRSNAQLGNMIETAQLLQGMENKRHESSTSCERHNQALTLFCEDDLQLLCDQCVEPESHGRHQVLSITEAASLHRKHLQDYSKLLKWEVKEIQGLMSALNKRTVTLREQAEAQRSQLTSECEKLMRFLDQEERAAFSRLEDEEMRLEKRLLDNIAALEHHGSSLRDLLRHLMLTGELSEAKMLSTVKDFYLNCRRQLISPSIFPVQLRRVEYSFPLQYSALQKVIQHFTDNVTLDLKTAHPNLLISKDRTCVTFTKKRQRIPGSSSFTKSPVVLGIPHFNSGRHFWEVQVGKKPKWAIGICKADSSIGERQSPNPWGYWRIVWQGDSFNVSGADPDSRLKAARATSIGVFLDYELGEVSFYGMPEKCHLYTFRDTFSGPVCPYFYIGPQSEPLRLCSATDSEC</sequence>
<evidence type="ECO:0000255" key="1"/>
<evidence type="ECO:0000255" key="2">
    <source>
        <dbReference type="PROSITE-ProRule" id="PRU00024"/>
    </source>
</evidence>
<evidence type="ECO:0000255" key="3">
    <source>
        <dbReference type="PROSITE-ProRule" id="PRU00175"/>
    </source>
</evidence>
<evidence type="ECO:0000255" key="4">
    <source>
        <dbReference type="PROSITE-ProRule" id="PRU00548"/>
    </source>
</evidence>
<evidence type="ECO:0000269" key="5">
    <source>
    </source>
</evidence>
<evidence type="ECO:0000305" key="6"/>
<evidence type="ECO:0000305" key="7">
    <source>
    </source>
</evidence>
<evidence type="ECO:0000312" key="8">
    <source>
        <dbReference type="MGI" id="MGI:2685640"/>
    </source>
</evidence>
<evidence type="ECO:0007829" key="9">
    <source>
        <dbReference type="PDB" id="7UG2"/>
    </source>
</evidence>
<organism>
    <name type="scientific">Mus musculus</name>
    <name type="common">Mouse</name>
    <dbReference type="NCBI Taxonomy" id="10090"/>
    <lineage>
        <taxon>Eukaryota</taxon>
        <taxon>Metazoa</taxon>
        <taxon>Chordata</taxon>
        <taxon>Craniata</taxon>
        <taxon>Vertebrata</taxon>
        <taxon>Euteleostomi</taxon>
        <taxon>Mammalia</taxon>
        <taxon>Eutheria</taxon>
        <taxon>Euarchontoglires</taxon>
        <taxon>Glires</taxon>
        <taxon>Rodentia</taxon>
        <taxon>Myomorpha</taxon>
        <taxon>Muroidea</taxon>
        <taxon>Muridae</taxon>
        <taxon>Murinae</taxon>
        <taxon>Mus</taxon>
        <taxon>Mus</taxon>
    </lineage>
</organism>